<protein>
    <recommendedName>
        <fullName evidence="1">Protein GrpE</fullName>
    </recommendedName>
    <alternativeName>
        <fullName evidence="1">HSP-70 cofactor</fullName>
    </alternativeName>
</protein>
<keyword id="KW-0143">Chaperone</keyword>
<keyword id="KW-0963">Cytoplasm</keyword>
<keyword id="KW-1185">Reference proteome</keyword>
<keyword id="KW-0346">Stress response</keyword>
<dbReference type="EMBL" id="CP000115">
    <property type="protein sequence ID" value="ABA03463.1"/>
    <property type="molecule type" value="Genomic_DNA"/>
</dbReference>
<dbReference type="RefSeq" id="WP_011313531.1">
    <property type="nucleotide sequence ID" value="NC_007406.1"/>
</dbReference>
<dbReference type="SMR" id="Q3SW78"/>
<dbReference type="STRING" id="323098.Nwi_0195"/>
<dbReference type="KEGG" id="nwi:Nwi_0195"/>
<dbReference type="eggNOG" id="COG0576">
    <property type="taxonomic scope" value="Bacteria"/>
</dbReference>
<dbReference type="HOGENOM" id="CLU_057217_6_2_5"/>
<dbReference type="OrthoDB" id="9789811at2"/>
<dbReference type="Proteomes" id="UP000002531">
    <property type="component" value="Chromosome"/>
</dbReference>
<dbReference type="GO" id="GO:0005737">
    <property type="term" value="C:cytoplasm"/>
    <property type="evidence" value="ECO:0007669"/>
    <property type="project" value="UniProtKB-SubCell"/>
</dbReference>
<dbReference type="GO" id="GO:0000774">
    <property type="term" value="F:adenyl-nucleotide exchange factor activity"/>
    <property type="evidence" value="ECO:0007669"/>
    <property type="project" value="InterPro"/>
</dbReference>
<dbReference type="GO" id="GO:0042803">
    <property type="term" value="F:protein homodimerization activity"/>
    <property type="evidence" value="ECO:0007669"/>
    <property type="project" value="InterPro"/>
</dbReference>
<dbReference type="GO" id="GO:0051087">
    <property type="term" value="F:protein-folding chaperone binding"/>
    <property type="evidence" value="ECO:0007669"/>
    <property type="project" value="InterPro"/>
</dbReference>
<dbReference type="GO" id="GO:0051082">
    <property type="term" value="F:unfolded protein binding"/>
    <property type="evidence" value="ECO:0007669"/>
    <property type="project" value="TreeGrafter"/>
</dbReference>
<dbReference type="GO" id="GO:0006457">
    <property type="term" value="P:protein folding"/>
    <property type="evidence" value="ECO:0007669"/>
    <property type="project" value="InterPro"/>
</dbReference>
<dbReference type="CDD" id="cd00446">
    <property type="entry name" value="GrpE"/>
    <property type="match status" value="1"/>
</dbReference>
<dbReference type="FunFam" id="2.30.22.10:FF:000002">
    <property type="entry name" value="GrpE protein homolog"/>
    <property type="match status" value="1"/>
</dbReference>
<dbReference type="Gene3D" id="3.90.20.20">
    <property type="match status" value="1"/>
</dbReference>
<dbReference type="Gene3D" id="2.30.22.10">
    <property type="entry name" value="Head domain of nucleotide exchange factor GrpE"/>
    <property type="match status" value="1"/>
</dbReference>
<dbReference type="HAMAP" id="MF_01151">
    <property type="entry name" value="GrpE"/>
    <property type="match status" value="1"/>
</dbReference>
<dbReference type="InterPro" id="IPR000740">
    <property type="entry name" value="GrpE"/>
</dbReference>
<dbReference type="InterPro" id="IPR013805">
    <property type="entry name" value="GrpE_coiled_coil"/>
</dbReference>
<dbReference type="InterPro" id="IPR009012">
    <property type="entry name" value="GrpE_head"/>
</dbReference>
<dbReference type="NCBIfam" id="NF010739">
    <property type="entry name" value="PRK14141.1"/>
    <property type="match status" value="1"/>
</dbReference>
<dbReference type="PANTHER" id="PTHR21237">
    <property type="entry name" value="GRPE PROTEIN"/>
    <property type="match status" value="1"/>
</dbReference>
<dbReference type="PANTHER" id="PTHR21237:SF23">
    <property type="entry name" value="GRPE PROTEIN HOMOLOG, MITOCHONDRIAL"/>
    <property type="match status" value="1"/>
</dbReference>
<dbReference type="Pfam" id="PF01025">
    <property type="entry name" value="GrpE"/>
    <property type="match status" value="1"/>
</dbReference>
<dbReference type="PRINTS" id="PR00773">
    <property type="entry name" value="GRPEPROTEIN"/>
</dbReference>
<dbReference type="SUPFAM" id="SSF58014">
    <property type="entry name" value="Coiled-coil domain of nucleotide exchange factor GrpE"/>
    <property type="match status" value="1"/>
</dbReference>
<dbReference type="SUPFAM" id="SSF51064">
    <property type="entry name" value="Head domain of nucleotide exchange factor GrpE"/>
    <property type="match status" value="1"/>
</dbReference>
<dbReference type="PROSITE" id="PS01071">
    <property type="entry name" value="GRPE"/>
    <property type="match status" value="1"/>
</dbReference>
<sequence>MTDSDGKTDKSGEPAAEVEPVVSKPYVMPDDPEDDALDALNKQLAEAKDRTLRTLAEMENLRKRTAREVSDARTYGISGFARDVLEIADNLQRALDAVPADARAAPDPGLKALIEGVELTERSLHNALEKHGVKKFDPAGEKFDPNVHQAMYEVPDPSIPVGTVAQVIQAGYMIGERVLRPALVGVAKGGAKAAAPE</sequence>
<reference key="1">
    <citation type="journal article" date="2006" name="Appl. Environ. Microbiol.">
        <title>Genome sequence of the chemolithoautotrophic nitrite-oxidizing bacterium Nitrobacter winogradskyi Nb-255.</title>
        <authorList>
            <person name="Starkenburg S.R."/>
            <person name="Chain P.S.G."/>
            <person name="Sayavedra-Soto L.A."/>
            <person name="Hauser L."/>
            <person name="Land M.L."/>
            <person name="Larimer F.W."/>
            <person name="Malfatti S.A."/>
            <person name="Klotz M.G."/>
            <person name="Bottomley P.J."/>
            <person name="Arp D.J."/>
            <person name="Hickey W.J."/>
        </authorList>
    </citation>
    <scope>NUCLEOTIDE SEQUENCE [LARGE SCALE GENOMIC DNA]</scope>
    <source>
        <strain>ATCC 25391 / DSM 10237 / CIP 104748 / NCIMB 11846 / Nb-255</strain>
    </source>
</reference>
<accession>Q3SW78</accession>
<gene>
    <name evidence="1" type="primary">grpE</name>
    <name type="ordered locus">Nwi_0195</name>
</gene>
<proteinExistence type="inferred from homology"/>
<comment type="function">
    <text evidence="1">Participates actively in the response to hyperosmotic and heat shock by preventing the aggregation of stress-denatured proteins, in association with DnaK and GrpE. It is the nucleotide exchange factor for DnaK and may function as a thermosensor. Unfolded proteins bind initially to DnaJ; upon interaction with the DnaJ-bound protein, DnaK hydrolyzes its bound ATP, resulting in the formation of a stable complex. GrpE releases ADP from DnaK; ATP binding to DnaK triggers the release of the substrate protein, thus completing the reaction cycle. Several rounds of ATP-dependent interactions between DnaJ, DnaK and GrpE are required for fully efficient folding.</text>
</comment>
<comment type="subunit">
    <text evidence="1">Homodimer.</text>
</comment>
<comment type="subcellular location">
    <subcellularLocation>
        <location evidence="1">Cytoplasm</location>
    </subcellularLocation>
</comment>
<comment type="similarity">
    <text evidence="1">Belongs to the GrpE family.</text>
</comment>
<name>GRPE_NITWN</name>
<feature type="chain" id="PRO_1000137590" description="Protein GrpE">
    <location>
        <begin position="1"/>
        <end position="197"/>
    </location>
</feature>
<feature type="region of interest" description="Disordered" evidence="2">
    <location>
        <begin position="1"/>
        <end position="35"/>
    </location>
</feature>
<feature type="compositionally biased region" description="Basic and acidic residues" evidence="2">
    <location>
        <begin position="1"/>
        <end position="12"/>
    </location>
</feature>
<organism>
    <name type="scientific">Nitrobacter winogradskyi (strain ATCC 25391 / DSM 10237 / CIP 104748 / NCIMB 11846 / Nb-255)</name>
    <dbReference type="NCBI Taxonomy" id="323098"/>
    <lineage>
        <taxon>Bacteria</taxon>
        <taxon>Pseudomonadati</taxon>
        <taxon>Pseudomonadota</taxon>
        <taxon>Alphaproteobacteria</taxon>
        <taxon>Hyphomicrobiales</taxon>
        <taxon>Nitrobacteraceae</taxon>
        <taxon>Nitrobacter</taxon>
    </lineage>
</organism>
<evidence type="ECO:0000255" key="1">
    <source>
        <dbReference type="HAMAP-Rule" id="MF_01151"/>
    </source>
</evidence>
<evidence type="ECO:0000256" key="2">
    <source>
        <dbReference type="SAM" id="MobiDB-lite"/>
    </source>
</evidence>